<keyword id="KW-0001">2Fe-2S</keyword>
<keyword id="KW-0003">3Fe-4S</keyword>
<keyword id="KW-0004">4Fe-4S</keyword>
<keyword id="KW-0249">Electron transport</keyword>
<keyword id="KW-0408">Iron</keyword>
<keyword id="KW-0411">Iron-sulfur</keyword>
<keyword id="KW-0472">Membrane</keyword>
<keyword id="KW-0479">Metal-binding</keyword>
<keyword id="KW-0496">Mitochondrion</keyword>
<keyword id="KW-0999">Mitochondrion inner membrane</keyword>
<keyword id="KW-0560">Oxidoreductase</keyword>
<keyword id="KW-1185">Reference proteome</keyword>
<keyword id="KW-0809">Transit peptide</keyword>
<keyword id="KW-0813">Transport</keyword>
<keyword id="KW-0816">Tricarboxylic acid cycle</keyword>
<gene>
    <name type="primary">sdhb</name>
</gene>
<proteinExistence type="evidence at transcript level"/>
<feature type="transit peptide" description="Mitochondrion" evidence="1">
    <location>
        <begin position="1"/>
        <end position="26"/>
    </location>
</feature>
<feature type="chain" id="PRO_0000343802" description="Succinate dehydrogenase [ubiquinone] iron-sulfur subunit, mitochondrial">
    <location>
        <begin position="27"/>
        <end position="282"/>
    </location>
</feature>
<feature type="domain" description="2Fe-2S ferredoxin-type" evidence="5">
    <location>
        <begin position="42"/>
        <end position="135"/>
    </location>
</feature>
<feature type="domain" description="4Fe-4S ferredoxin-type" evidence="6">
    <location>
        <begin position="178"/>
        <end position="208"/>
    </location>
</feature>
<feature type="binding site" evidence="2">
    <location>
        <position position="95"/>
    </location>
    <ligand>
        <name>[2Fe-2S] cluster</name>
        <dbReference type="ChEBI" id="CHEBI:190135"/>
    </ligand>
</feature>
<feature type="binding site" evidence="2">
    <location>
        <position position="100"/>
    </location>
    <ligand>
        <name>[2Fe-2S] cluster</name>
        <dbReference type="ChEBI" id="CHEBI:190135"/>
    </ligand>
</feature>
<feature type="binding site" evidence="2">
    <location>
        <position position="103"/>
    </location>
    <ligand>
        <name>[2Fe-2S] cluster</name>
        <dbReference type="ChEBI" id="CHEBI:190135"/>
    </ligand>
</feature>
<feature type="binding site" evidence="2">
    <location>
        <position position="115"/>
    </location>
    <ligand>
        <name>[2Fe-2S] cluster</name>
        <dbReference type="ChEBI" id="CHEBI:190135"/>
    </ligand>
</feature>
<feature type="binding site" evidence="2">
    <location>
        <position position="188"/>
    </location>
    <ligand>
        <name>[4Fe-4S] cluster</name>
        <dbReference type="ChEBI" id="CHEBI:49883"/>
    </ligand>
</feature>
<feature type="binding site" evidence="2">
    <location>
        <position position="191"/>
    </location>
    <ligand>
        <name>[4Fe-4S] cluster</name>
        <dbReference type="ChEBI" id="CHEBI:49883"/>
    </ligand>
</feature>
<feature type="binding site" evidence="2">
    <location>
        <position position="194"/>
    </location>
    <ligand>
        <name>[4Fe-4S] cluster</name>
        <dbReference type="ChEBI" id="CHEBI:49883"/>
    </ligand>
</feature>
<feature type="binding site" evidence="2">
    <location>
        <position position="198"/>
    </location>
    <ligand>
        <name>[3Fe-4S] cluster</name>
        <dbReference type="ChEBI" id="CHEBI:21137"/>
    </ligand>
</feature>
<feature type="binding site" evidence="2">
    <location>
        <position position="203"/>
    </location>
    <ligand>
        <name>a ubiquinone</name>
        <dbReference type="ChEBI" id="CHEBI:16389"/>
        <note>ligand shared with dhsd</note>
    </ligand>
</feature>
<feature type="binding site" evidence="2">
    <location>
        <position position="245"/>
    </location>
    <ligand>
        <name>[3Fe-4S] cluster</name>
        <dbReference type="ChEBI" id="CHEBI:21137"/>
    </ligand>
</feature>
<feature type="binding site" evidence="2">
    <location>
        <position position="251"/>
    </location>
    <ligand>
        <name>[3Fe-4S] cluster</name>
        <dbReference type="ChEBI" id="CHEBI:21137"/>
    </ligand>
</feature>
<feature type="binding site" evidence="2">
    <location>
        <position position="255"/>
    </location>
    <ligand>
        <name>[4Fe-4S] cluster</name>
        <dbReference type="ChEBI" id="CHEBI:49883"/>
    </ligand>
</feature>
<feature type="sequence conflict" description="In Ref. 1; AAH43859." evidence="7" ref="1">
    <original>K</original>
    <variation>E</variation>
    <location>
        <position position="164"/>
    </location>
</feature>
<feature type="sequence conflict" description="In Ref. 1; AAH43859." evidence="7" ref="1">
    <original>A</original>
    <variation>V</variation>
    <location>
        <position position="279"/>
    </location>
</feature>
<reference key="1">
    <citation type="submission" date="2005-10" db="EMBL/GenBank/DDBJ databases">
        <authorList>
            <consortium name="NIH - Xenopus Gene Collection (XGC) project"/>
        </authorList>
    </citation>
    <scope>NUCLEOTIDE SEQUENCE [LARGE SCALE MRNA]</scope>
    <source>
        <tissue>Embryo</tissue>
        <tissue>Testis</tissue>
    </source>
</reference>
<protein>
    <recommendedName>
        <fullName>Succinate dehydrogenase [ubiquinone] iron-sulfur subunit, mitochondrial</fullName>
        <ecNumber evidence="1">1.3.5.1</ecNumber>
    </recommendedName>
    <alternativeName>
        <fullName>Iron-sulfur subunit of complex II</fullName>
        <shortName>Ip</shortName>
    </alternativeName>
    <alternativeName>
        <fullName>Malate dehydrogenase [quinone] iron-sulfur subunit</fullName>
        <ecNumber evidence="3">1.1.5.-</ecNumber>
    </alternativeName>
</protein>
<organism>
    <name type="scientific">Xenopus laevis</name>
    <name type="common">African clawed frog</name>
    <dbReference type="NCBI Taxonomy" id="8355"/>
    <lineage>
        <taxon>Eukaryota</taxon>
        <taxon>Metazoa</taxon>
        <taxon>Chordata</taxon>
        <taxon>Craniata</taxon>
        <taxon>Vertebrata</taxon>
        <taxon>Euteleostomi</taxon>
        <taxon>Amphibia</taxon>
        <taxon>Batrachia</taxon>
        <taxon>Anura</taxon>
        <taxon>Pipoidea</taxon>
        <taxon>Pipidae</taxon>
        <taxon>Xenopodinae</taxon>
        <taxon>Xenopus</taxon>
        <taxon>Xenopus</taxon>
    </lineage>
</organism>
<name>SDHB_XENLA</name>
<dbReference type="EC" id="1.3.5.1" evidence="1"/>
<dbReference type="EC" id="1.1.5.-" evidence="3"/>
<dbReference type="EMBL" id="BC043859">
    <property type="protein sequence ID" value="AAH43859.1"/>
    <property type="molecule type" value="mRNA"/>
</dbReference>
<dbReference type="EMBL" id="BC106300">
    <property type="protein sequence ID" value="AAI06301.1"/>
    <property type="molecule type" value="mRNA"/>
</dbReference>
<dbReference type="RefSeq" id="NP_001080247.1">
    <property type="nucleotide sequence ID" value="NM_001086778.1"/>
</dbReference>
<dbReference type="SMR" id="Q3B8J8"/>
<dbReference type="BioGRID" id="98181">
    <property type="interactions" value="2"/>
</dbReference>
<dbReference type="DNASU" id="379939"/>
<dbReference type="GeneID" id="379939"/>
<dbReference type="KEGG" id="xla:379939"/>
<dbReference type="AGR" id="Xenbase:XB-GENE-970197"/>
<dbReference type="CTD" id="379939"/>
<dbReference type="Xenbase" id="XB-GENE-970197">
    <property type="gene designation" value="sdhb.S"/>
</dbReference>
<dbReference type="OrthoDB" id="1696654at2759"/>
<dbReference type="UniPathway" id="UPA00223">
    <property type="reaction ID" value="UER01006"/>
</dbReference>
<dbReference type="Proteomes" id="UP000186698">
    <property type="component" value="Chromosome 7S"/>
</dbReference>
<dbReference type="Bgee" id="379939">
    <property type="expression patterns" value="Expressed in testis and 19 other cell types or tissues"/>
</dbReference>
<dbReference type="GO" id="GO:0005743">
    <property type="term" value="C:mitochondrial inner membrane"/>
    <property type="evidence" value="ECO:0000250"/>
    <property type="project" value="UniProtKB"/>
</dbReference>
<dbReference type="GO" id="GO:0031966">
    <property type="term" value="C:mitochondrial membrane"/>
    <property type="evidence" value="ECO:0000318"/>
    <property type="project" value="GO_Central"/>
</dbReference>
<dbReference type="GO" id="GO:0045273">
    <property type="term" value="C:respiratory chain complex II (succinate dehydrogenase)"/>
    <property type="evidence" value="ECO:0000250"/>
    <property type="project" value="UniProtKB"/>
</dbReference>
<dbReference type="GO" id="GO:0051537">
    <property type="term" value="F:2 iron, 2 sulfur cluster binding"/>
    <property type="evidence" value="ECO:0000250"/>
    <property type="project" value="UniProtKB"/>
</dbReference>
<dbReference type="GO" id="GO:0051538">
    <property type="term" value="F:3 iron, 4 sulfur cluster binding"/>
    <property type="evidence" value="ECO:0000250"/>
    <property type="project" value="UniProtKB"/>
</dbReference>
<dbReference type="GO" id="GO:0051539">
    <property type="term" value="F:4 iron, 4 sulfur cluster binding"/>
    <property type="evidence" value="ECO:0000250"/>
    <property type="project" value="UniProtKB"/>
</dbReference>
<dbReference type="GO" id="GO:0009055">
    <property type="term" value="F:electron transfer activity"/>
    <property type="evidence" value="ECO:0007669"/>
    <property type="project" value="InterPro"/>
</dbReference>
<dbReference type="GO" id="GO:0046872">
    <property type="term" value="F:metal ion binding"/>
    <property type="evidence" value="ECO:0007669"/>
    <property type="project" value="UniProtKB-KW"/>
</dbReference>
<dbReference type="GO" id="GO:0008177">
    <property type="term" value="F:succinate dehydrogenase (quinone) activity"/>
    <property type="evidence" value="ECO:0000250"/>
    <property type="project" value="UniProtKB"/>
</dbReference>
<dbReference type="GO" id="GO:0048039">
    <property type="term" value="F:ubiquinone binding"/>
    <property type="evidence" value="ECO:0000250"/>
    <property type="project" value="UniProtKB"/>
</dbReference>
<dbReference type="GO" id="GO:0009060">
    <property type="term" value="P:aerobic respiration"/>
    <property type="evidence" value="ECO:0000318"/>
    <property type="project" value="GO_Central"/>
</dbReference>
<dbReference type="GO" id="GO:0022904">
    <property type="term" value="P:respiratory electron transport chain"/>
    <property type="evidence" value="ECO:0000318"/>
    <property type="project" value="GO_Central"/>
</dbReference>
<dbReference type="GO" id="GO:0006099">
    <property type="term" value="P:tricarboxylic acid cycle"/>
    <property type="evidence" value="ECO:0007669"/>
    <property type="project" value="UniProtKB-UniPathway"/>
</dbReference>
<dbReference type="CDD" id="cd00207">
    <property type="entry name" value="fer2"/>
    <property type="match status" value="1"/>
</dbReference>
<dbReference type="FunFam" id="1.10.1060.10:FF:000029">
    <property type="entry name" value="Succinate dehydrogenase [ubiquinone] iron-sulfur subunit, mitochondrial"/>
    <property type="match status" value="1"/>
</dbReference>
<dbReference type="FunFam" id="3.10.20.30:FF:000007">
    <property type="entry name" value="Succinate dehydrogenase [ubiquinone] iron-sulfur subunit, mitochondrial"/>
    <property type="match status" value="1"/>
</dbReference>
<dbReference type="Gene3D" id="3.10.20.30">
    <property type="match status" value="1"/>
</dbReference>
<dbReference type="Gene3D" id="1.10.1060.10">
    <property type="entry name" value="Alpha-helical ferredoxin"/>
    <property type="match status" value="1"/>
</dbReference>
<dbReference type="InterPro" id="IPR036010">
    <property type="entry name" value="2Fe-2S_ferredoxin-like_sf"/>
</dbReference>
<dbReference type="InterPro" id="IPR001041">
    <property type="entry name" value="2Fe-2S_ferredoxin-type"/>
</dbReference>
<dbReference type="InterPro" id="IPR006058">
    <property type="entry name" value="2Fe2S_fd_BS"/>
</dbReference>
<dbReference type="InterPro" id="IPR017896">
    <property type="entry name" value="4Fe4S_Fe-S-bd"/>
</dbReference>
<dbReference type="InterPro" id="IPR017900">
    <property type="entry name" value="4Fe4S_Fe_S_CS"/>
</dbReference>
<dbReference type="InterPro" id="IPR012675">
    <property type="entry name" value="Beta-grasp_dom_sf"/>
</dbReference>
<dbReference type="InterPro" id="IPR009051">
    <property type="entry name" value="Helical_ferredxn"/>
</dbReference>
<dbReference type="InterPro" id="IPR050573">
    <property type="entry name" value="SDH/FRD_Iron-Sulfur"/>
</dbReference>
<dbReference type="InterPro" id="IPR004489">
    <property type="entry name" value="Succ_DH/fum_Rdtase_Fe-S"/>
</dbReference>
<dbReference type="InterPro" id="IPR025192">
    <property type="entry name" value="Succ_DH/fum_Rdtase_N"/>
</dbReference>
<dbReference type="NCBIfam" id="TIGR00384">
    <property type="entry name" value="dhsB"/>
    <property type="match status" value="1"/>
</dbReference>
<dbReference type="NCBIfam" id="NF004616">
    <property type="entry name" value="PRK05950.1"/>
    <property type="match status" value="1"/>
</dbReference>
<dbReference type="PANTHER" id="PTHR11921:SF29">
    <property type="entry name" value="SUCCINATE DEHYDROGENASE [UBIQUINONE] IRON-SULFUR SUBUNIT, MITOCHONDRIAL"/>
    <property type="match status" value="1"/>
</dbReference>
<dbReference type="PANTHER" id="PTHR11921">
    <property type="entry name" value="SUCCINATE DEHYDROGENASE IRON-SULFUR PROTEIN"/>
    <property type="match status" value="1"/>
</dbReference>
<dbReference type="Pfam" id="PF13085">
    <property type="entry name" value="Fer2_3"/>
    <property type="match status" value="1"/>
</dbReference>
<dbReference type="Pfam" id="PF13534">
    <property type="entry name" value="Fer4_17"/>
    <property type="match status" value="1"/>
</dbReference>
<dbReference type="SUPFAM" id="SSF54292">
    <property type="entry name" value="2Fe-2S ferredoxin-like"/>
    <property type="match status" value="1"/>
</dbReference>
<dbReference type="SUPFAM" id="SSF46548">
    <property type="entry name" value="alpha-helical ferredoxin"/>
    <property type="match status" value="1"/>
</dbReference>
<dbReference type="PROSITE" id="PS00197">
    <property type="entry name" value="2FE2S_FER_1"/>
    <property type="match status" value="1"/>
</dbReference>
<dbReference type="PROSITE" id="PS51085">
    <property type="entry name" value="2FE2S_FER_2"/>
    <property type="match status" value="1"/>
</dbReference>
<dbReference type="PROSITE" id="PS00198">
    <property type="entry name" value="4FE4S_FER_1"/>
    <property type="match status" value="1"/>
</dbReference>
<dbReference type="PROSITE" id="PS51379">
    <property type="entry name" value="4FE4S_FER_2"/>
    <property type="match status" value="1"/>
</dbReference>
<comment type="function">
    <text evidence="1 3">Iron-sulfur protein (IP) subunit of the succinate dehydrogenase complex (mitochondrial respiratory chain complex II), responsible for transferring electrons from succinate to ubiquinone (coenzyme Q) (By similarity). SDH also oxidizes malate to the non-canonical enol form of oxaloacetate, enol-oxaloacetate. Enol-oxaloacetate, which is a potent inhibitor of the succinate dehydrogenase activity, is further isomerized into keto-oxaloacetate (By similarity).</text>
</comment>
<comment type="catalytic activity">
    <reaction evidence="1">
        <text>a quinone + succinate = fumarate + a quinol</text>
        <dbReference type="Rhea" id="RHEA:40523"/>
        <dbReference type="ChEBI" id="CHEBI:24646"/>
        <dbReference type="ChEBI" id="CHEBI:29806"/>
        <dbReference type="ChEBI" id="CHEBI:30031"/>
        <dbReference type="ChEBI" id="CHEBI:132124"/>
        <dbReference type="EC" id="1.3.5.1"/>
    </reaction>
</comment>
<comment type="catalytic activity">
    <reaction evidence="3">
        <text>(R)-malate + a quinone = enol-oxaloacetate + a quinol</text>
        <dbReference type="Rhea" id="RHEA:79827"/>
        <dbReference type="ChEBI" id="CHEBI:15588"/>
        <dbReference type="ChEBI" id="CHEBI:17479"/>
        <dbReference type="ChEBI" id="CHEBI:24646"/>
        <dbReference type="ChEBI" id="CHEBI:132124"/>
    </reaction>
    <physiologicalReaction direction="left-to-right" evidence="3">
        <dbReference type="Rhea" id="RHEA:79828"/>
    </physiologicalReaction>
</comment>
<comment type="catalytic activity">
    <reaction evidence="3">
        <text>(S)-malate + a quinone = enol-oxaloacetate + a quinol</text>
        <dbReference type="Rhea" id="RHEA:79831"/>
        <dbReference type="ChEBI" id="CHEBI:15589"/>
        <dbReference type="ChEBI" id="CHEBI:17479"/>
        <dbReference type="ChEBI" id="CHEBI:24646"/>
        <dbReference type="ChEBI" id="CHEBI:132124"/>
    </reaction>
    <physiologicalReaction direction="left-to-right" evidence="3">
        <dbReference type="Rhea" id="RHEA:79832"/>
    </physiologicalReaction>
</comment>
<comment type="cofactor">
    <cofactor evidence="2">
        <name>[2Fe-2S] cluster</name>
        <dbReference type="ChEBI" id="CHEBI:190135"/>
    </cofactor>
    <text evidence="2">Binds 1 [2Fe-2S] cluster.</text>
</comment>
<comment type="cofactor">
    <cofactor evidence="2">
        <name>[3Fe-4S] cluster</name>
        <dbReference type="ChEBI" id="CHEBI:21137"/>
    </cofactor>
    <text evidence="2">Binds 1 [3Fe-4S] cluster.</text>
</comment>
<comment type="cofactor">
    <cofactor evidence="2">
        <name>[4Fe-4S] cluster</name>
        <dbReference type="ChEBI" id="CHEBI:49883"/>
    </cofactor>
    <text evidence="2">Binds 1 [4Fe-4S] cluster.</text>
</comment>
<comment type="activity regulation">
    <text evidence="3">Enol-oxaloacetate inhibits the succinate dehydrogenase activity.</text>
</comment>
<comment type="pathway">
    <text>Carbohydrate metabolism; tricarboxylic acid cycle; fumarate from succinate (eukaryal route): step 1/1.</text>
</comment>
<comment type="subunit">
    <text evidence="1">Component of complex II composed of four subunits: the flavoprotein (FP) sdha, iron-sulfur protein (IP) sdhb, and a cytochrome b composed of sdhc and sdhd.</text>
</comment>
<comment type="subcellular location">
    <subcellularLocation>
        <location evidence="4">Mitochondrion inner membrane</location>
        <topology evidence="4">Peripheral membrane protein</topology>
        <orientation evidence="4">Matrix side</orientation>
    </subcellularLocation>
</comment>
<comment type="similarity">
    <text evidence="7">Belongs to the succinate dehydrogenase/fumarate reductase iron-sulfur protein family.</text>
</comment>
<sequence length="282" mass="31777">MAAVVFSLRRSGPVLRLSGALQVSRGAQTAAAPASQAAARIKKFAIYRWDPDKPGDKPRMQTYEVDLNTCGPMVLDALIKIKNEVDPTLTFRRSCREGICGSCAMNINGGNTLACTVRIDTNLSKVSKIYPLPHMYVVKDLVPDLSNFYAQYKSIEPYLKKKDKSQQGKEQYLQSIEDRDKLDGLYECILCACCSTSCPSYWWNADKYLGPAVLMQAYRWMIDSRDDFTEERLSKLQDPFSLYRCHTIMNCTRTCPKGLNPGKAIAEIKKMMAMYKERAVSA</sequence>
<evidence type="ECO:0000250" key="1">
    <source>
        <dbReference type="UniProtKB" id="P21912"/>
    </source>
</evidence>
<evidence type="ECO:0000250" key="2">
    <source>
        <dbReference type="UniProtKB" id="Q007T0"/>
    </source>
</evidence>
<evidence type="ECO:0000250" key="3">
    <source>
        <dbReference type="UniProtKB" id="Q3T189"/>
    </source>
</evidence>
<evidence type="ECO:0000250" key="4">
    <source>
        <dbReference type="UniProtKB" id="Q9YHT2"/>
    </source>
</evidence>
<evidence type="ECO:0000255" key="5">
    <source>
        <dbReference type="PROSITE-ProRule" id="PRU00465"/>
    </source>
</evidence>
<evidence type="ECO:0000255" key="6">
    <source>
        <dbReference type="PROSITE-ProRule" id="PRU00711"/>
    </source>
</evidence>
<evidence type="ECO:0000305" key="7"/>
<accession>Q3B8J8</accession>
<accession>Q7ZYB6</accession>